<name>SAHH_MYCBT</name>
<dbReference type="EC" id="3.13.2.1" evidence="1"/>
<dbReference type="EMBL" id="AP010918">
    <property type="protein sequence ID" value="BAH27551.1"/>
    <property type="molecule type" value="Genomic_DNA"/>
</dbReference>
<dbReference type="RefSeq" id="WP_003417039.1">
    <property type="nucleotide sequence ID" value="NZ_CP014566.1"/>
</dbReference>
<dbReference type="SMR" id="C1AH22"/>
<dbReference type="GeneID" id="45427242"/>
<dbReference type="KEGG" id="mbt:JTY_3273"/>
<dbReference type="HOGENOM" id="CLU_025194_2_1_11"/>
<dbReference type="UniPathway" id="UPA00314">
    <property type="reaction ID" value="UER00076"/>
</dbReference>
<dbReference type="GO" id="GO:0005829">
    <property type="term" value="C:cytosol"/>
    <property type="evidence" value="ECO:0007669"/>
    <property type="project" value="TreeGrafter"/>
</dbReference>
<dbReference type="GO" id="GO:0004013">
    <property type="term" value="F:adenosylhomocysteinase activity"/>
    <property type="evidence" value="ECO:0007669"/>
    <property type="project" value="UniProtKB-UniRule"/>
</dbReference>
<dbReference type="GO" id="GO:0071269">
    <property type="term" value="P:L-homocysteine biosynthetic process"/>
    <property type="evidence" value="ECO:0007669"/>
    <property type="project" value="UniProtKB-UniRule"/>
</dbReference>
<dbReference type="GO" id="GO:0006730">
    <property type="term" value="P:one-carbon metabolic process"/>
    <property type="evidence" value="ECO:0007669"/>
    <property type="project" value="UniProtKB-KW"/>
</dbReference>
<dbReference type="GO" id="GO:0033353">
    <property type="term" value="P:S-adenosylmethionine cycle"/>
    <property type="evidence" value="ECO:0007669"/>
    <property type="project" value="TreeGrafter"/>
</dbReference>
<dbReference type="CDD" id="cd00401">
    <property type="entry name" value="SAHH"/>
    <property type="match status" value="1"/>
</dbReference>
<dbReference type="FunFam" id="3.40.50.720:FF:000004">
    <property type="entry name" value="Adenosylhomocysteinase"/>
    <property type="match status" value="1"/>
</dbReference>
<dbReference type="Gene3D" id="3.40.50.1480">
    <property type="entry name" value="Adenosylhomocysteinase-like"/>
    <property type="match status" value="1"/>
</dbReference>
<dbReference type="Gene3D" id="3.40.50.720">
    <property type="entry name" value="NAD(P)-binding Rossmann-like Domain"/>
    <property type="match status" value="1"/>
</dbReference>
<dbReference type="HAMAP" id="MF_00563">
    <property type="entry name" value="AdoHcyase"/>
    <property type="match status" value="1"/>
</dbReference>
<dbReference type="InterPro" id="IPR042172">
    <property type="entry name" value="Adenosylhomocyst_ase-like_sf"/>
</dbReference>
<dbReference type="InterPro" id="IPR000043">
    <property type="entry name" value="Adenosylhomocysteinase-like"/>
</dbReference>
<dbReference type="InterPro" id="IPR015878">
    <property type="entry name" value="Ado_hCys_hydrolase_NAD-bd"/>
</dbReference>
<dbReference type="InterPro" id="IPR036291">
    <property type="entry name" value="NAD(P)-bd_dom_sf"/>
</dbReference>
<dbReference type="InterPro" id="IPR020082">
    <property type="entry name" value="S-Ado-L-homoCys_hydrolase_CS"/>
</dbReference>
<dbReference type="NCBIfam" id="TIGR00936">
    <property type="entry name" value="ahcY"/>
    <property type="match status" value="1"/>
</dbReference>
<dbReference type="NCBIfam" id="NF004005">
    <property type="entry name" value="PRK05476.2-3"/>
    <property type="match status" value="1"/>
</dbReference>
<dbReference type="PANTHER" id="PTHR23420">
    <property type="entry name" value="ADENOSYLHOMOCYSTEINASE"/>
    <property type="match status" value="1"/>
</dbReference>
<dbReference type="PANTHER" id="PTHR23420:SF0">
    <property type="entry name" value="ADENOSYLHOMOCYSTEINASE"/>
    <property type="match status" value="1"/>
</dbReference>
<dbReference type="Pfam" id="PF05221">
    <property type="entry name" value="AdoHcyase"/>
    <property type="match status" value="1"/>
</dbReference>
<dbReference type="Pfam" id="PF00670">
    <property type="entry name" value="AdoHcyase_NAD"/>
    <property type="match status" value="1"/>
</dbReference>
<dbReference type="PIRSF" id="PIRSF001109">
    <property type="entry name" value="Ad_hcy_hydrolase"/>
    <property type="match status" value="1"/>
</dbReference>
<dbReference type="SMART" id="SM00996">
    <property type="entry name" value="AdoHcyase"/>
    <property type="match status" value="1"/>
</dbReference>
<dbReference type="SMART" id="SM00997">
    <property type="entry name" value="AdoHcyase_NAD"/>
    <property type="match status" value="1"/>
</dbReference>
<dbReference type="SUPFAM" id="SSF52283">
    <property type="entry name" value="Formate/glycerate dehydrogenase catalytic domain-like"/>
    <property type="match status" value="1"/>
</dbReference>
<dbReference type="SUPFAM" id="SSF51735">
    <property type="entry name" value="NAD(P)-binding Rossmann-fold domains"/>
    <property type="match status" value="1"/>
</dbReference>
<dbReference type="PROSITE" id="PS00738">
    <property type="entry name" value="ADOHCYASE_1"/>
    <property type="match status" value="1"/>
</dbReference>
<dbReference type="PROSITE" id="PS00739">
    <property type="entry name" value="ADOHCYASE_2"/>
    <property type="match status" value="1"/>
</dbReference>
<evidence type="ECO:0000255" key="1">
    <source>
        <dbReference type="HAMAP-Rule" id="MF_00563"/>
    </source>
</evidence>
<proteinExistence type="inferred from homology"/>
<accession>C1AH22</accession>
<protein>
    <recommendedName>
        <fullName evidence="1">Adenosylhomocysteinase</fullName>
        <ecNumber evidence="1">3.13.2.1</ecNumber>
    </recommendedName>
    <alternativeName>
        <fullName evidence="1">S-adenosyl-L-homocysteine hydrolase</fullName>
        <shortName evidence="1">AdoHcyase</shortName>
    </alternativeName>
</protein>
<keyword id="KW-0963">Cytoplasm</keyword>
<keyword id="KW-0378">Hydrolase</keyword>
<keyword id="KW-0520">NAD</keyword>
<keyword id="KW-0554">One-carbon metabolism</keyword>
<sequence length="495" mass="54324">MTGNLVTKNSLTPDVRNGIDFKIADLSLADFGRKELRIAEHEMPGLMSLRREYAEVQPLKGARISGSLHMTVQTAVLIETLTALGAEVRWASCNIFSTQDHAAAAVVVGPHGTPDEPKGVPVFAWKGETLEEYWWAAEQMLTWPDPDKPANMILDDGGDATMLVLRGMQYEKAGVVPPAEEDDPAEWKVFLNLLRTRFETDKDKWTKIAESVKGVTEETTTGVLRLYQFAAAGDLAFPAINVNDSVTKSKFDNKYGTRHSLIDGINRGTDALIGGKKVLICGYGDVGKGCAEAMKGQGARVSVTEIDPINALQAMMEGFDVVTVEEAIGDADIVVTATGNKDIIMLEHIKAMKDHAILGNIGHFDNEIDMAGLERSGATRVNVKPQVDLWTFGDTGRSIIVLSEGRLLNLGNATGHPSFVMSNSFANQTIAQIELWTKNDEYDNEVYRLPKHLDEKVARIHVEALGGHLTKLTKEQAEYLGVDVEGPYKPDHYRY</sequence>
<reference key="1">
    <citation type="journal article" date="2009" name="Vaccine">
        <title>Whole genome sequence analysis of Mycobacterium bovis bacillus Calmette-Guerin (BCG) Tokyo 172: a comparative study of BCG vaccine substrains.</title>
        <authorList>
            <person name="Seki M."/>
            <person name="Honda I."/>
            <person name="Fujita I."/>
            <person name="Yano I."/>
            <person name="Yamamoto S."/>
            <person name="Koyama A."/>
        </authorList>
    </citation>
    <scope>NUCLEOTIDE SEQUENCE [LARGE SCALE GENOMIC DNA]</scope>
    <source>
        <strain>BCG / Tokyo 172 / ATCC 35737 / TMC 1019</strain>
    </source>
</reference>
<feature type="chain" id="PRO_1000196672" description="Adenosylhomocysteinase">
    <location>
        <begin position="1"/>
        <end position="495"/>
    </location>
</feature>
<feature type="binding site" evidence="1">
    <location>
        <position position="71"/>
    </location>
    <ligand>
        <name>substrate</name>
    </ligand>
</feature>
<feature type="binding site" evidence="1">
    <location>
        <position position="156"/>
    </location>
    <ligand>
        <name>substrate</name>
    </ligand>
</feature>
<feature type="binding site" evidence="1">
    <location>
        <position position="218"/>
    </location>
    <ligand>
        <name>substrate</name>
    </ligand>
</feature>
<feature type="binding site" evidence="1">
    <location>
        <begin position="219"/>
        <end position="221"/>
    </location>
    <ligand>
        <name>NAD(+)</name>
        <dbReference type="ChEBI" id="CHEBI:57540"/>
    </ligand>
</feature>
<feature type="binding site" evidence="1">
    <location>
        <position position="248"/>
    </location>
    <ligand>
        <name>substrate</name>
    </ligand>
</feature>
<feature type="binding site" evidence="1">
    <location>
        <position position="252"/>
    </location>
    <ligand>
        <name>substrate</name>
    </ligand>
</feature>
<feature type="binding site" evidence="1">
    <location>
        <position position="253"/>
    </location>
    <ligand>
        <name>NAD(+)</name>
        <dbReference type="ChEBI" id="CHEBI:57540"/>
    </ligand>
</feature>
<feature type="binding site" evidence="1">
    <location>
        <begin position="282"/>
        <end position="287"/>
    </location>
    <ligand>
        <name>NAD(+)</name>
        <dbReference type="ChEBI" id="CHEBI:57540"/>
    </ligand>
</feature>
<feature type="binding site" evidence="1">
    <location>
        <position position="305"/>
    </location>
    <ligand>
        <name>NAD(+)</name>
        <dbReference type="ChEBI" id="CHEBI:57540"/>
    </ligand>
</feature>
<feature type="binding site" evidence="1">
    <location>
        <position position="340"/>
    </location>
    <ligand>
        <name>NAD(+)</name>
        <dbReference type="ChEBI" id="CHEBI:57540"/>
    </ligand>
</feature>
<feature type="binding site" evidence="1">
    <location>
        <begin position="361"/>
        <end position="363"/>
    </location>
    <ligand>
        <name>NAD(+)</name>
        <dbReference type="ChEBI" id="CHEBI:57540"/>
    </ligand>
</feature>
<feature type="binding site" evidence="1">
    <location>
        <position position="409"/>
    </location>
    <ligand>
        <name>NAD(+)</name>
        <dbReference type="ChEBI" id="CHEBI:57540"/>
    </ligand>
</feature>
<gene>
    <name evidence="1" type="primary">ahcY</name>
    <name type="ordered locus">JTY_3273</name>
</gene>
<comment type="function">
    <text evidence="1">May play a key role in the regulation of the intracellular concentration of adenosylhomocysteine.</text>
</comment>
<comment type="catalytic activity">
    <reaction evidence="1">
        <text>S-adenosyl-L-homocysteine + H2O = L-homocysteine + adenosine</text>
        <dbReference type="Rhea" id="RHEA:21708"/>
        <dbReference type="ChEBI" id="CHEBI:15377"/>
        <dbReference type="ChEBI" id="CHEBI:16335"/>
        <dbReference type="ChEBI" id="CHEBI:57856"/>
        <dbReference type="ChEBI" id="CHEBI:58199"/>
        <dbReference type="EC" id="3.13.2.1"/>
    </reaction>
</comment>
<comment type="cofactor">
    <cofactor evidence="1">
        <name>NAD(+)</name>
        <dbReference type="ChEBI" id="CHEBI:57540"/>
    </cofactor>
    <text evidence="1">Binds 1 NAD(+) per subunit.</text>
</comment>
<comment type="pathway">
    <text evidence="1">Amino-acid biosynthesis; L-homocysteine biosynthesis; L-homocysteine from S-adenosyl-L-homocysteine: step 1/1.</text>
</comment>
<comment type="subcellular location">
    <subcellularLocation>
        <location evidence="1">Cytoplasm</location>
    </subcellularLocation>
</comment>
<comment type="similarity">
    <text evidence="1">Belongs to the adenosylhomocysteinase family.</text>
</comment>
<organism>
    <name type="scientific">Mycobacterium bovis (strain BCG / Tokyo 172 / ATCC 35737 / TMC 1019)</name>
    <dbReference type="NCBI Taxonomy" id="561275"/>
    <lineage>
        <taxon>Bacteria</taxon>
        <taxon>Bacillati</taxon>
        <taxon>Actinomycetota</taxon>
        <taxon>Actinomycetes</taxon>
        <taxon>Mycobacteriales</taxon>
        <taxon>Mycobacteriaceae</taxon>
        <taxon>Mycobacterium</taxon>
        <taxon>Mycobacterium tuberculosis complex</taxon>
    </lineage>
</organism>